<proteinExistence type="inferred from homology"/>
<organism>
    <name type="scientific">Nitrosomonas europaea (strain ATCC 19718 / CIP 103999 / KCTC 2705 / NBRC 14298)</name>
    <dbReference type="NCBI Taxonomy" id="228410"/>
    <lineage>
        <taxon>Bacteria</taxon>
        <taxon>Pseudomonadati</taxon>
        <taxon>Pseudomonadota</taxon>
        <taxon>Betaproteobacteria</taxon>
        <taxon>Nitrosomonadales</taxon>
        <taxon>Nitrosomonadaceae</taxon>
        <taxon>Nitrosomonas</taxon>
    </lineage>
</organism>
<keyword id="KW-1185">Reference proteome</keyword>
<accession>Q82X93</accession>
<protein>
    <recommendedName>
        <fullName evidence="1">UPF0235 protein NE0395</fullName>
    </recommendedName>
</protein>
<feature type="chain" id="PRO_0000139448" description="UPF0235 protein NE0395">
    <location>
        <begin position="1"/>
        <end position="100"/>
    </location>
</feature>
<gene>
    <name type="ordered locus">NE0395</name>
</gene>
<evidence type="ECO:0000255" key="1">
    <source>
        <dbReference type="HAMAP-Rule" id="MF_00634"/>
    </source>
</evidence>
<name>Y395_NITEU</name>
<comment type="similarity">
    <text evidence="1">Belongs to the UPF0235 family.</text>
</comment>
<sequence>MSWYSFGNDRSLLILKLYVQPGARQTEAVGICGEELKIKLAALPVDGKANRALTEFLAKRFNVPRKNITLKRGEQSRHKVVEVCQSSNGPEVLFSEMRAE</sequence>
<reference key="1">
    <citation type="journal article" date="2003" name="J. Bacteriol.">
        <title>Complete genome sequence of the ammonia-oxidizing bacterium and obligate chemolithoautotroph Nitrosomonas europaea.</title>
        <authorList>
            <person name="Chain P."/>
            <person name="Lamerdin J.E."/>
            <person name="Larimer F.W."/>
            <person name="Regala W."/>
            <person name="Lao V."/>
            <person name="Land M.L."/>
            <person name="Hauser L."/>
            <person name="Hooper A.B."/>
            <person name="Klotz M.G."/>
            <person name="Norton J."/>
            <person name="Sayavedra-Soto L.A."/>
            <person name="Arciero D.M."/>
            <person name="Hommes N.G."/>
            <person name="Whittaker M.M."/>
            <person name="Arp D.J."/>
        </authorList>
    </citation>
    <scope>NUCLEOTIDE SEQUENCE [LARGE SCALE GENOMIC DNA]</scope>
    <source>
        <strain>ATCC 19718 / CIP 103999 / KCTC 2705 / NBRC 14298</strain>
    </source>
</reference>
<dbReference type="EMBL" id="AL954747">
    <property type="protein sequence ID" value="CAD84306.1"/>
    <property type="molecule type" value="Genomic_DNA"/>
</dbReference>
<dbReference type="RefSeq" id="WP_011111030.1">
    <property type="nucleotide sequence ID" value="NC_004757.1"/>
</dbReference>
<dbReference type="SMR" id="Q82X93"/>
<dbReference type="STRING" id="228410.NE0395"/>
<dbReference type="GeneID" id="87103602"/>
<dbReference type="KEGG" id="neu:NE0395"/>
<dbReference type="eggNOG" id="COG1872">
    <property type="taxonomic scope" value="Bacteria"/>
</dbReference>
<dbReference type="HOGENOM" id="CLU_130694_5_1_4"/>
<dbReference type="OrthoDB" id="9800587at2"/>
<dbReference type="PhylomeDB" id="Q82X93"/>
<dbReference type="Proteomes" id="UP000001416">
    <property type="component" value="Chromosome"/>
</dbReference>
<dbReference type="GO" id="GO:0005737">
    <property type="term" value="C:cytoplasm"/>
    <property type="evidence" value="ECO:0007669"/>
    <property type="project" value="TreeGrafter"/>
</dbReference>
<dbReference type="Gene3D" id="3.30.1200.10">
    <property type="entry name" value="YggU-like"/>
    <property type="match status" value="1"/>
</dbReference>
<dbReference type="HAMAP" id="MF_00634">
    <property type="entry name" value="UPF0235"/>
    <property type="match status" value="1"/>
</dbReference>
<dbReference type="InterPro" id="IPR003746">
    <property type="entry name" value="DUF167"/>
</dbReference>
<dbReference type="InterPro" id="IPR036591">
    <property type="entry name" value="YggU-like_sf"/>
</dbReference>
<dbReference type="NCBIfam" id="TIGR00251">
    <property type="entry name" value="DUF167 family protein"/>
    <property type="match status" value="1"/>
</dbReference>
<dbReference type="PANTHER" id="PTHR13420">
    <property type="entry name" value="UPF0235 PROTEIN C15ORF40"/>
    <property type="match status" value="1"/>
</dbReference>
<dbReference type="PANTHER" id="PTHR13420:SF7">
    <property type="entry name" value="UPF0235 PROTEIN C15ORF40"/>
    <property type="match status" value="1"/>
</dbReference>
<dbReference type="Pfam" id="PF02594">
    <property type="entry name" value="DUF167"/>
    <property type="match status" value="1"/>
</dbReference>
<dbReference type="SMART" id="SM01152">
    <property type="entry name" value="DUF167"/>
    <property type="match status" value="1"/>
</dbReference>
<dbReference type="SUPFAM" id="SSF69786">
    <property type="entry name" value="YggU-like"/>
    <property type="match status" value="1"/>
</dbReference>